<evidence type="ECO:0000250" key="1"/>
<evidence type="ECO:0000256" key="2">
    <source>
        <dbReference type="SAM" id="MobiDB-lite"/>
    </source>
</evidence>
<evidence type="ECO:0000305" key="3"/>
<reference key="1">
    <citation type="journal article" date="1995" name="Eur. J. Epidemiol.">
        <title>Sequencing and linkage analysis of a Coxiella burnetii 2.1 kb NotI fragment.</title>
        <authorList>
            <person name="Willems H."/>
            <person name="Thiele D."/>
            <person name="Krauss H."/>
        </authorList>
    </citation>
    <scope>NUCLEOTIDE SEQUENCE [GENOMIC DNA]</scope>
    <source>
        <strain>Nine Mile phase I</strain>
    </source>
</reference>
<reference key="2">
    <citation type="journal article" date="2003" name="Proc. Natl. Acad. Sci. U.S.A.">
        <title>Complete genome sequence of the Q-fever pathogen, Coxiella burnetii.</title>
        <authorList>
            <person name="Seshadri R."/>
            <person name="Paulsen I.T."/>
            <person name="Eisen J.A."/>
            <person name="Read T.D."/>
            <person name="Nelson K.E."/>
            <person name="Nelson W.C."/>
            <person name="Ward N.L."/>
            <person name="Tettelin H."/>
            <person name="Davidsen T.M."/>
            <person name="Beanan M.J."/>
            <person name="DeBoy R.T."/>
            <person name="Daugherty S.C."/>
            <person name="Brinkac L.M."/>
            <person name="Madupu R."/>
            <person name="Dodson R.J."/>
            <person name="Khouri H.M."/>
            <person name="Lee K.H."/>
            <person name="Carty H.A."/>
            <person name="Scanlan D."/>
            <person name="Heinzen R.A."/>
            <person name="Thompson H.A."/>
            <person name="Samuel J.E."/>
            <person name="Fraser C.M."/>
            <person name="Heidelberg J.F."/>
        </authorList>
    </citation>
    <scope>NUCLEOTIDE SEQUENCE [LARGE SCALE GENOMIC DNA]</scope>
    <source>
        <strain>RSA 493 / Nine Mile phase I</strain>
    </source>
</reference>
<organism>
    <name type="scientific">Coxiella burnetii (strain RSA 493 / Nine Mile phase I)</name>
    <dbReference type="NCBI Taxonomy" id="227377"/>
    <lineage>
        <taxon>Bacteria</taxon>
        <taxon>Pseudomonadati</taxon>
        <taxon>Pseudomonadota</taxon>
        <taxon>Gammaproteobacteria</taxon>
        <taxon>Legionellales</taxon>
        <taxon>Coxiellaceae</taxon>
        <taxon>Coxiella</taxon>
    </lineage>
</organism>
<proteinExistence type="inferred from homology"/>
<comment type="function">
    <text evidence="1">Peptide chain release factor 1 directs the termination of translation in response to the peptide chain termination codons UAG and UAA.</text>
</comment>
<comment type="subcellular location">
    <subcellularLocation>
        <location evidence="1">Cytoplasm</location>
    </subcellularLocation>
</comment>
<comment type="PTM">
    <text evidence="1">Methylated by PrmC. Methylation increases the termination efficiency of RF1 (By similarity).</text>
</comment>
<comment type="similarity">
    <text evidence="3">Belongs to the prokaryotic/mitochondrial release factor family.</text>
</comment>
<protein>
    <recommendedName>
        <fullName>Peptide chain release factor 1</fullName>
        <shortName>RF-1</shortName>
    </recommendedName>
</protein>
<feature type="chain" id="PRO_0000177664" description="Peptide chain release factor 1">
    <location>
        <begin position="1"/>
        <end position="361"/>
    </location>
</feature>
<feature type="region of interest" description="Disordered" evidence="2">
    <location>
        <begin position="286"/>
        <end position="306"/>
    </location>
</feature>
<feature type="modified residue" description="N5-methylglutamine" evidence="1">
    <location>
        <position position="237"/>
    </location>
</feature>
<feature type="sequence conflict" description="In Ref. 1; CAA55563." evidence="3" ref="1">
    <original>K</original>
    <variation>N</variation>
    <location>
        <position position="99"/>
    </location>
</feature>
<accession>P47849</accession>
<gene>
    <name type="primary">prfA</name>
    <name type="ordered locus">CBU_1965</name>
</gene>
<name>RF1_COXBU</name>
<keyword id="KW-0963">Cytoplasm</keyword>
<keyword id="KW-0488">Methylation</keyword>
<keyword id="KW-0648">Protein biosynthesis</keyword>
<keyword id="KW-1185">Reference proteome</keyword>
<dbReference type="EMBL" id="X78969">
    <property type="protein sequence ID" value="CAA55563.1"/>
    <property type="molecule type" value="Genomic_DNA"/>
</dbReference>
<dbReference type="EMBL" id="AE016828">
    <property type="protein sequence ID" value="AAO91454.1"/>
    <property type="molecule type" value="Genomic_DNA"/>
</dbReference>
<dbReference type="PIR" id="A61648">
    <property type="entry name" value="A61648"/>
</dbReference>
<dbReference type="RefSeq" id="NP_820940.1">
    <property type="nucleotide sequence ID" value="NC_002971.4"/>
</dbReference>
<dbReference type="RefSeq" id="WP_005772919.1">
    <property type="nucleotide sequence ID" value="NZ_CDBG01000001.1"/>
</dbReference>
<dbReference type="SMR" id="P47849"/>
<dbReference type="STRING" id="227377.CBU_1965"/>
<dbReference type="DNASU" id="1209878"/>
<dbReference type="EnsemblBacteria" id="AAO91454">
    <property type="protein sequence ID" value="AAO91454"/>
    <property type="gene ID" value="CBU_1965"/>
</dbReference>
<dbReference type="GeneID" id="1209878"/>
<dbReference type="KEGG" id="cbu:CBU_1965"/>
<dbReference type="PATRIC" id="fig|227377.7.peg.1953"/>
<dbReference type="eggNOG" id="COG0216">
    <property type="taxonomic scope" value="Bacteria"/>
</dbReference>
<dbReference type="HOGENOM" id="CLU_036856_0_1_6"/>
<dbReference type="OrthoDB" id="9806673at2"/>
<dbReference type="Proteomes" id="UP000002671">
    <property type="component" value="Chromosome"/>
</dbReference>
<dbReference type="GO" id="GO:0005737">
    <property type="term" value="C:cytoplasm"/>
    <property type="evidence" value="ECO:0007669"/>
    <property type="project" value="UniProtKB-SubCell"/>
</dbReference>
<dbReference type="GO" id="GO:0016149">
    <property type="term" value="F:translation release factor activity, codon specific"/>
    <property type="evidence" value="ECO:0007669"/>
    <property type="project" value="UniProtKB-UniRule"/>
</dbReference>
<dbReference type="FunFam" id="3.30.160.20:FF:000004">
    <property type="entry name" value="Peptide chain release factor 1"/>
    <property type="match status" value="1"/>
</dbReference>
<dbReference type="FunFam" id="3.30.70.1660:FF:000002">
    <property type="entry name" value="Peptide chain release factor 1"/>
    <property type="match status" value="1"/>
</dbReference>
<dbReference type="FunFam" id="3.30.70.1660:FF:000004">
    <property type="entry name" value="Peptide chain release factor 1"/>
    <property type="match status" value="1"/>
</dbReference>
<dbReference type="Gene3D" id="3.30.160.20">
    <property type="match status" value="1"/>
</dbReference>
<dbReference type="Gene3D" id="3.30.70.1660">
    <property type="match status" value="1"/>
</dbReference>
<dbReference type="Gene3D" id="6.10.140.1950">
    <property type="match status" value="1"/>
</dbReference>
<dbReference type="HAMAP" id="MF_00093">
    <property type="entry name" value="Rel_fac_1"/>
    <property type="match status" value="1"/>
</dbReference>
<dbReference type="InterPro" id="IPR005139">
    <property type="entry name" value="PCRF"/>
</dbReference>
<dbReference type="InterPro" id="IPR000352">
    <property type="entry name" value="Pep_chain_release_fac_I"/>
</dbReference>
<dbReference type="InterPro" id="IPR045853">
    <property type="entry name" value="Pep_chain_release_fac_I_sf"/>
</dbReference>
<dbReference type="InterPro" id="IPR050057">
    <property type="entry name" value="Prokaryotic/Mito_RF"/>
</dbReference>
<dbReference type="InterPro" id="IPR004373">
    <property type="entry name" value="RF-1"/>
</dbReference>
<dbReference type="NCBIfam" id="TIGR00019">
    <property type="entry name" value="prfA"/>
    <property type="match status" value="1"/>
</dbReference>
<dbReference type="NCBIfam" id="NF001859">
    <property type="entry name" value="PRK00591.1"/>
    <property type="match status" value="1"/>
</dbReference>
<dbReference type="PANTHER" id="PTHR43804">
    <property type="entry name" value="LD18447P"/>
    <property type="match status" value="1"/>
</dbReference>
<dbReference type="PANTHER" id="PTHR43804:SF7">
    <property type="entry name" value="LD18447P"/>
    <property type="match status" value="1"/>
</dbReference>
<dbReference type="Pfam" id="PF03462">
    <property type="entry name" value="PCRF"/>
    <property type="match status" value="1"/>
</dbReference>
<dbReference type="Pfam" id="PF00472">
    <property type="entry name" value="RF-1"/>
    <property type="match status" value="1"/>
</dbReference>
<dbReference type="SMART" id="SM00937">
    <property type="entry name" value="PCRF"/>
    <property type="match status" value="1"/>
</dbReference>
<dbReference type="SUPFAM" id="SSF75620">
    <property type="entry name" value="Release factor"/>
    <property type="match status" value="1"/>
</dbReference>
<dbReference type="PROSITE" id="PS00745">
    <property type="entry name" value="RF_PROK_I"/>
    <property type="match status" value="1"/>
</dbReference>
<sequence length="361" mass="40763">MKPSLIEKLKTLTYRYSEIGGLLSDSTVINDQDRYRELGKEYAQLEPIVKCFQQFQQNEKAIESAEEMQQEKDPELRKLAEEELEQLTLKKEELEDQLKLLLVPKDPNDERNVFLEIRAGTGGNEAAIFAGDLFRMYARYAETKGWRVNIVSAHEGEHGGFKEVIARVIGEGVYSQLKFESGAHRVQRVPVTESQGRIHTSACTVAIMPEVDEIDQIKINPAELRIDTFRASGAGGQHVNRTDSAIRITHLPTGVVVECQDERSQHKNKARAMSLLQSKLLAAERAKQDQEQAAKRKSLVGSGDRSERIRTYNFPQGRVTDHRINLTLYQLDEVIEGDLDPVIGPLIRELQAEQLAELSGE</sequence>